<keyword id="KW-0002">3D-structure</keyword>
<keyword id="KW-0106">Calcium</keyword>
<keyword id="KW-0107">Calcium channel</keyword>
<keyword id="KW-0109">Calcium transport</keyword>
<keyword id="KW-0175">Coiled coil</keyword>
<keyword id="KW-0407">Ion channel</keyword>
<keyword id="KW-0406">Ion transport</keyword>
<keyword id="KW-0472">Membrane</keyword>
<keyword id="KW-0479">Metal-binding</keyword>
<keyword id="KW-0496">Mitochondrion</keyword>
<keyword id="KW-0999">Mitochondrion inner membrane</keyword>
<keyword id="KW-1185">Reference proteome</keyword>
<keyword id="KW-0809">Transit peptide</keyword>
<keyword id="KW-0812">Transmembrane</keyword>
<keyword id="KW-1133">Transmembrane helix</keyword>
<keyword id="KW-0813">Transport</keyword>
<gene>
    <name evidence="7 12" type="primary">mcu-1</name>
    <name evidence="12" type="ORF">K02B2.3</name>
</gene>
<dbReference type="EMBL" id="BX284604">
    <property type="protein sequence ID" value="CCD61802.1"/>
    <property type="molecule type" value="Genomic_DNA"/>
</dbReference>
<dbReference type="PIR" id="B88700">
    <property type="entry name" value="B88700"/>
</dbReference>
<dbReference type="RefSeq" id="NP_500892.1">
    <property type="nucleotide sequence ID" value="NM_068491.7"/>
</dbReference>
<dbReference type="PDB" id="5ID3">
    <property type="method" value="NMR"/>
    <property type="chains" value="A/B/C/D/E=167-318"/>
</dbReference>
<dbReference type="PDBsum" id="5ID3"/>
<dbReference type="BMRB" id="Q21121"/>
<dbReference type="SMR" id="Q21121"/>
<dbReference type="DIP" id="DIP-61976N"/>
<dbReference type="FunCoup" id="Q21121">
    <property type="interactions" value="1415"/>
</dbReference>
<dbReference type="IntAct" id="Q21121">
    <property type="interactions" value="1"/>
</dbReference>
<dbReference type="STRING" id="6239.K02B2.3.1"/>
<dbReference type="PaxDb" id="6239-K02B2.3"/>
<dbReference type="PeptideAtlas" id="Q21121"/>
<dbReference type="EnsemblMetazoa" id="K02B2.3.1">
    <property type="protein sequence ID" value="K02B2.3.1"/>
    <property type="gene ID" value="WBGene00019296"/>
</dbReference>
<dbReference type="GeneID" id="177362"/>
<dbReference type="KEGG" id="cel:CELE_K02B2.3"/>
<dbReference type="UCSC" id="K02B2.3.1">
    <property type="organism name" value="c. elegans"/>
</dbReference>
<dbReference type="AGR" id="WB:WBGene00019296"/>
<dbReference type="CTD" id="177362"/>
<dbReference type="WormBase" id="K02B2.3">
    <property type="protein sequence ID" value="CE27192"/>
    <property type="gene ID" value="WBGene00019296"/>
    <property type="gene designation" value="mcu-1"/>
</dbReference>
<dbReference type="eggNOG" id="KOG2966">
    <property type="taxonomic scope" value="Eukaryota"/>
</dbReference>
<dbReference type="GeneTree" id="ENSGT00940000168365"/>
<dbReference type="HOGENOM" id="CLU_056554_0_1_1"/>
<dbReference type="InParanoid" id="Q21121"/>
<dbReference type="OMA" id="DDIYVEY"/>
<dbReference type="OrthoDB" id="278338at2759"/>
<dbReference type="PhylomeDB" id="Q21121"/>
<dbReference type="Reactome" id="R-CEL-8949215">
    <property type="pathway name" value="Mitochondrial calcium ion transport"/>
</dbReference>
<dbReference type="Reactome" id="R-CEL-8949664">
    <property type="pathway name" value="Processing of SMDT1"/>
</dbReference>
<dbReference type="SignaLink" id="Q21121"/>
<dbReference type="PRO" id="PR:Q21121"/>
<dbReference type="Proteomes" id="UP000001940">
    <property type="component" value="Chromosome IV"/>
</dbReference>
<dbReference type="Bgee" id="WBGene00019296">
    <property type="expression patterns" value="Expressed in adult organism and 4 other cell types or tissues"/>
</dbReference>
<dbReference type="GO" id="GO:1990246">
    <property type="term" value="C:uniplex complex"/>
    <property type="evidence" value="ECO:0000318"/>
    <property type="project" value="GO_Central"/>
</dbReference>
<dbReference type="GO" id="GO:0005262">
    <property type="term" value="F:calcium channel activity"/>
    <property type="evidence" value="ECO:0000314"/>
    <property type="project" value="UniProtKB"/>
</dbReference>
<dbReference type="GO" id="GO:0042802">
    <property type="term" value="F:identical protein binding"/>
    <property type="evidence" value="ECO:0000353"/>
    <property type="project" value="IntAct"/>
</dbReference>
<dbReference type="GO" id="GO:0046872">
    <property type="term" value="F:metal ion binding"/>
    <property type="evidence" value="ECO:0007669"/>
    <property type="project" value="UniProtKB-KW"/>
</dbReference>
<dbReference type="GO" id="GO:0015292">
    <property type="term" value="F:uniporter activity"/>
    <property type="evidence" value="ECO:0000318"/>
    <property type="project" value="GO_Central"/>
</dbReference>
<dbReference type="GO" id="GO:0036444">
    <property type="term" value="P:calcium import into the mitochondrion"/>
    <property type="evidence" value="ECO:0000315"/>
    <property type="project" value="UniProtKB"/>
</dbReference>
<dbReference type="GO" id="GO:0051560">
    <property type="term" value="P:mitochondrial calcium ion homeostasis"/>
    <property type="evidence" value="ECO:0000315"/>
    <property type="project" value="UniProtKB"/>
</dbReference>
<dbReference type="GO" id="GO:0006851">
    <property type="term" value="P:mitochondrial calcium ion transmembrane transport"/>
    <property type="evidence" value="ECO:0000315"/>
    <property type="project" value="UniProtKB"/>
</dbReference>
<dbReference type="GO" id="GO:0051260">
    <property type="term" value="P:protein homooligomerization"/>
    <property type="evidence" value="ECO:0000314"/>
    <property type="project" value="UniProtKB"/>
</dbReference>
<dbReference type="GO" id="GO:1903426">
    <property type="term" value="P:regulation of reactive oxygen species biosynthetic process"/>
    <property type="evidence" value="ECO:0000315"/>
    <property type="project" value="UniProtKB"/>
</dbReference>
<dbReference type="GO" id="GO:0061041">
    <property type="term" value="P:regulation of wound healing"/>
    <property type="evidence" value="ECO:0000315"/>
    <property type="project" value="UniProtKB"/>
</dbReference>
<dbReference type="InterPro" id="IPR006769">
    <property type="entry name" value="MCU_C"/>
</dbReference>
<dbReference type="InterPro" id="IPR039055">
    <property type="entry name" value="MCU_fam"/>
</dbReference>
<dbReference type="PANTHER" id="PTHR13462">
    <property type="entry name" value="CALCIUM UNIPORTER PROTEIN, MITOCHONDRIAL"/>
    <property type="match status" value="1"/>
</dbReference>
<dbReference type="PANTHER" id="PTHR13462:SF10">
    <property type="entry name" value="CALCIUM UNIPORTER PROTEIN, MITOCHONDRIAL"/>
    <property type="match status" value="1"/>
</dbReference>
<dbReference type="Pfam" id="PF04678">
    <property type="entry name" value="MCU"/>
    <property type="match status" value="1"/>
</dbReference>
<protein>
    <recommendedName>
        <fullName evidence="9">Calcium uniporter protein, mitochondrial</fullName>
        <shortName evidence="8">cMCU</shortName>
    </recommendedName>
</protein>
<accession>Q21121</accession>
<sequence length="333" mass="38554">MRNGRCLVTPFVTAQRLANLRNTLWNRQQIAFSTTTASSSTSPIQESSSPLSIRFEYGLPLLDVPLPSRNEPCQFTMRPLSDTIGSLCEFLRQEDRGIDYVAVYGTNGVKLATCTSIEHLLQFGSFRLRLNDKFFDVTVPKTGTMPYDSDKLRQLDDLRATVASLHAALCVDEYKLSREKKLLLQLENAETLLAPLHDAKRKIEQECEAHTDRVMWAGFAAMGVQTGLFARLTWWEYSWDIMEPVTYFATYSTVCATFGYYLYTQQSFEYPSARERVYTKQFYRRAQKQNFDIEKYNRLVTEVDELRNQLKRMRDPLFQHLPVSYLSNLEAEK</sequence>
<organism>
    <name type="scientific">Caenorhabditis elegans</name>
    <dbReference type="NCBI Taxonomy" id="6239"/>
    <lineage>
        <taxon>Eukaryota</taxon>
        <taxon>Metazoa</taxon>
        <taxon>Ecdysozoa</taxon>
        <taxon>Nematoda</taxon>
        <taxon>Chromadorea</taxon>
        <taxon>Rhabditida</taxon>
        <taxon>Rhabditina</taxon>
        <taxon>Rhabditomorpha</taxon>
        <taxon>Rhabditoidea</taxon>
        <taxon>Rhabditidae</taxon>
        <taxon>Peloderinae</taxon>
        <taxon>Caenorhabditis</taxon>
    </lineage>
</organism>
<comment type="function">
    <text evidence="1 3 6">Mitochondrial inner membrane calcium uniporter that mediates calcium uptake into mitochondria (PubMed:25313960, PubMed:31983639). Constitutes a pore-forming and calcium-conducting subunit (By similarity). Mitochondrial calcium homeostasis plays key roles in cellular physiology and regulates cell bioenergetics, cytoplasmic calcium signals and activation of cell death pathways (By similarity). Required for rapid mitochondrial calcium uptake and mitochondrial reactive oxygen species (mtROS) production after wounding (PubMed:25313960). In addition, together with mitochondrial calcium regulator micu-1, required for mitochondrial calcium uptake following axon injury in PLM touch receptor neurons (PubMed:31983639).</text>
</comment>
<comment type="catalytic activity">
    <reaction evidence="3 6">
        <text>Ca(2+)(in) = Ca(2+)(out)</text>
        <dbReference type="Rhea" id="RHEA:29671"/>
        <dbReference type="ChEBI" id="CHEBI:29108"/>
    </reaction>
</comment>
<comment type="activity regulation">
    <text evidence="4">Inhibited by ruthenium red or its derivative Ru360; possibly by obstructing the pore.</text>
</comment>
<comment type="interaction">
    <interactant intactId="EBI-11465987">
        <id>Q21121</id>
    </interactant>
    <interactant intactId="EBI-11465987">
        <id>Q21121</id>
        <label>mcu-1</label>
    </interactant>
    <organismsDiffer>false</organismsDiffer>
    <experiments>7</experiments>
</comment>
<comment type="subcellular location">
    <subcellularLocation>
        <location evidence="1">Mitochondrion inner membrane</location>
        <topology evidence="1">Multi-pass membrane protein</topology>
    </subcellularLocation>
</comment>
<comment type="domain">
    <text evidence="4">Forms a well-packed pentamer with an overall cylindrical shape. The inner core of the pentamer is formed with the second transmembrane region and the second coiled-coil region (residues 293-316): while the transmembrane regions pack into a five-helix bundle having a largely polar pore across the membrane, the coiled-coil outside the membrane forms a pentamer with a hydrophobic core, which may contribute to stabilizing the transmembrane pore structure. The transmembrane pore is wrapped by the first transmembrane region through contacts between the first and the second transmembrane regions. The second transmembrane is followed by the inner juxtamembrane region (IJMH) that orients at a wide angle relative to the second transmembrane. The two core domains are held together on the periphery by the outer juxtamembrane helix (OJMH), which contains a kink around Glu-204 and interacts with the IJMH.</text>
</comment>
<comment type="domain">
    <text evidence="4">The selectivity filter (also named DXXE motif) connecting the transmembrane regions forms a pentameric barrel that constitutes the mouth of the pore. Inside the barrel, both acidic residues are in position to form two carboxylate rings: the Asp-240 ring is solvent exposed, and the Glu-243 ring is located deeper, guarding the entrance of the second transmembrane pore. In absence of emre-1 regulator, the calcium ions cannot exit the channel, suggesting that emre-1-binding induces conformational rearrangements to allow calcium to exit.</text>
</comment>
<comment type="disruption phenotype">
    <text evidence="3 5">Null mutants are viable and fertile, but have strongly impaired mitochondrial calcium uptake following laser or needle wounding (PubMed:25313960). Reduces the wound-induced transient elevations in mitochondrial reactive oxygen species superoxide (which are known as mitochondrial flashes or mitoflashes) (PubMed:25313960). Double knockout with the srb-13 xm1 mutant suppresses the sperm navigation defect in the srb-13 single mutant (PubMed:28662030).</text>
</comment>
<comment type="similarity">
    <text evidence="9">Belongs to the MCU (TC 1.A.77) family.</text>
</comment>
<evidence type="ECO:0000250" key="1">
    <source>
        <dbReference type="UniProtKB" id="Q8NE86"/>
    </source>
</evidence>
<evidence type="ECO:0000255" key="2"/>
<evidence type="ECO:0000269" key="3">
    <source>
    </source>
</evidence>
<evidence type="ECO:0000269" key="4">
    <source>
    </source>
</evidence>
<evidence type="ECO:0000269" key="5">
    <source>
    </source>
</evidence>
<evidence type="ECO:0000269" key="6">
    <source>
    </source>
</evidence>
<evidence type="ECO:0000303" key="7">
    <source>
    </source>
</evidence>
<evidence type="ECO:0000303" key="8">
    <source>
    </source>
</evidence>
<evidence type="ECO:0000305" key="9"/>
<evidence type="ECO:0000305" key="10">
    <source>
    </source>
</evidence>
<evidence type="ECO:0000312" key="11">
    <source>
        <dbReference type="PDB" id="5ID3"/>
    </source>
</evidence>
<evidence type="ECO:0000312" key="12">
    <source>
        <dbReference type="WormBase" id="K02B2.3"/>
    </source>
</evidence>
<evidence type="ECO:0007829" key="13">
    <source>
        <dbReference type="PDB" id="5ID3"/>
    </source>
</evidence>
<feature type="transit peptide" description="Mitochondrion" evidence="2">
    <location>
        <begin position="1"/>
        <end position="22"/>
    </location>
</feature>
<feature type="chain" id="PRO_0000437212" description="Calcium uniporter protein, mitochondrial" evidence="2">
    <location>
        <begin position="23"/>
        <end position="333"/>
    </location>
</feature>
<feature type="topological domain" description="Mitochondrial matrix" evidence="1">
    <location>
        <begin position="23"/>
        <end position="214"/>
    </location>
</feature>
<feature type="transmembrane region" description="Helical" evidence="4">
    <location>
        <begin position="215"/>
        <end position="234"/>
    </location>
</feature>
<feature type="topological domain" description="Mitochondrial intermembrane" evidence="1">
    <location>
        <begin position="235"/>
        <end position="243"/>
    </location>
</feature>
<feature type="transmembrane region" description="Helical" evidence="4">
    <location>
        <begin position="244"/>
        <end position="260"/>
    </location>
</feature>
<feature type="topological domain" description="Mitochondrial matrix" evidence="1">
    <location>
        <begin position="261"/>
        <end position="333"/>
    </location>
</feature>
<feature type="region of interest" description="Outer juxtamembrane helix (OJMH)" evidence="4">
    <location>
        <begin position="195"/>
        <end position="213"/>
    </location>
</feature>
<feature type="region of interest" description="Inner juxtamembrane helix (IJMH)" evidence="4">
    <location>
        <begin position="262"/>
        <end position="271"/>
    </location>
</feature>
<feature type="coiled-coil region" evidence="4">
    <location>
        <begin position="180"/>
        <end position="193"/>
    </location>
</feature>
<feature type="coiled-coil region" evidence="4">
    <location>
        <begin position="289"/>
        <end position="316"/>
    </location>
</feature>
<feature type="short sequence motif" description="Selectivity filter" evidence="10">
    <location>
        <begin position="239"/>
        <end position="247"/>
    </location>
</feature>
<feature type="binding site" evidence="1">
    <location>
        <position position="243"/>
    </location>
    <ligand>
        <name>Ca(2+)</name>
        <dbReference type="ChEBI" id="CHEBI:29108"/>
    </ligand>
</feature>
<feature type="mutagenesis site" description="Strongly reduced sensitivity to ruthenium red inhibition." evidence="4">
    <original>S</original>
    <variation>A</variation>
    <location>
        <position position="238"/>
    </location>
</feature>
<feature type="strand" evidence="13">
    <location>
        <begin position="168"/>
        <end position="171"/>
    </location>
</feature>
<feature type="helix" evidence="13">
    <location>
        <begin position="180"/>
        <end position="192"/>
    </location>
</feature>
<feature type="helix" evidence="13">
    <location>
        <begin position="195"/>
        <end position="202"/>
    </location>
</feature>
<feature type="turn" evidence="13">
    <location>
        <begin position="203"/>
        <end position="206"/>
    </location>
</feature>
<feature type="helix" evidence="13">
    <location>
        <begin position="207"/>
        <end position="210"/>
    </location>
</feature>
<feature type="helix" evidence="13">
    <location>
        <begin position="211"/>
        <end position="214"/>
    </location>
</feature>
<feature type="turn" evidence="13">
    <location>
        <begin position="215"/>
        <end position="217"/>
    </location>
</feature>
<feature type="helix" evidence="13">
    <location>
        <begin position="218"/>
        <end position="225"/>
    </location>
</feature>
<feature type="helix" evidence="13">
    <location>
        <begin position="227"/>
        <end position="233"/>
    </location>
</feature>
<feature type="turn" evidence="13">
    <location>
        <begin position="234"/>
        <end position="236"/>
    </location>
</feature>
<feature type="helix" evidence="13">
    <location>
        <begin position="244"/>
        <end position="265"/>
    </location>
</feature>
<feature type="turn" evidence="13">
    <location>
        <begin position="266"/>
        <end position="269"/>
    </location>
</feature>
<feature type="strand" evidence="13">
    <location>
        <begin position="276"/>
        <end position="278"/>
    </location>
</feature>
<feature type="helix" evidence="13">
    <location>
        <begin position="293"/>
        <end position="314"/>
    </location>
</feature>
<proteinExistence type="evidence at protein level"/>
<name>MCU_CAEEL</name>
<reference key="1">
    <citation type="journal article" date="1998" name="Science">
        <title>Genome sequence of the nematode C. elegans: a platform for investigating biology.</title>
        <authorList>
            <consortium name="The C. elegans sequencing consortium"/>
        </authorList>
    </citation>
    <scope>NUCLEOTIDE SEQUENCE [LARGE SCALE GENOMIC DNA]</scope>
    <source>
        <strain>Bristol N2</strain>
    </source>
</reference>
<reference key="2">
    <citation type="journal article" date="2014" name="Dev. Cell">
        <title>C. elegans epidermal wounding induces a mitochondrial ROS burst that promotes wound repair.</title>
        <authorList>
            <person name="Xu S."/>
            <person name="Chisholm A.D."/>
        </authorList>
    </citation>
    <scope>FUNCTION</scope>
    <scope>TRANSPORTER ACTIVITY</scope>
    <scope>DISRUPTION PHENOTYPE</scope>
</reference>
<reference evidence="11" key="3">
    <citation type="journal article" date="2016" name="Nature">
        <title>Architecture of the mitochondrial calcium uniporter.</title>
        <authorList>
            <person name="Oxenoid K."/>
            <person name="Dong Y."/>
            <person name="Cao C."/>
            <person name="Cui T."/>
            <person name="Sancak Y."/>
            <person name="Markhard A.L."/>
            <person name="Grabarek Z."/>
            <person name="Kong L."/>
            <person name="Liu Z."/>
            <person name="Ouyang B."/>
            <person name="Cong Y."/>
            <person name="Mootha V.K."/>
            <person name="Chou J.J."/>
        </authorList>
    </citation>
    <scope>STRUCTURE BY NMR OF 167-317 OF MUTANT ALA-238</scope>
    <scope>ACTIVITY REGULATION</scope>
    <scope>SUBUNIT</scope>
    <scope>DOMAIN</scope>
    <scope>MUTAGENESIS OF SER-238</scope>
</reference>
<reference key="4">
    <citation type="journal article" date="2017" name="PLoS Biol.">
        <title>Chemosensory and hyperoxia circuits in C. elegans males influence sperm navigational capacity.</title>
        <authorList>
            <person name="Hoang H.D."/>
            <person name="Miller M.A."/>
        </authorList>
    </citation>
    <scope>DISRUPTION PHENOTYPE</scope>
</reference>
<reference key="5">
    <citation type="journal article" date="2020" name="Curr. Biol.">
        <title>The mRNA Decay Factor CAR-1/LSM14 Regulates Axon Regeneration via Mitochondrial Calcium Dynamics.</title>
        <authorList>
            <person name="Tang N.H."/>
            <person name="Kim K.W."/>
            <person name="Xu S."/>
            <person name="Blazie S.M."/>
            <person name="Yee B.A."/>
            <person name="Yeo G.W."/>
            <person name="Jin Y."/>
            <person name="Chisholm A.D."/>
        </authorList>
    </citation>
    <scope>FUNCTION</scope>
    <scope>TRANSPORTER ACTIVITY</scope>
</reference>